<evidence type="ECO:0000255" key="1">
    <source>
        <dbReference type="HAMAP-Rule" id="MF_00434"/>
    </source>
</evidence>
<evidence type="ECO:0000305" key="2"/>
<accession>Q3B6N5</accession>
<organism>
    <name type="scientific">Chlorobium luteolum (strain DSM 273 / BCRC 81028 / 2530)</name>
    <name type="common">Pelodictyon luteolum</name>
    <dbReference type="NCBI Taxonomy" id="319225"/>
    <lineage>
        <taxon>Bacteria</taxon>
        <taxon>Pseudomonadati</taxon>
        <taxon>Chlorobiota</taxon>
        <taxon>Chlorobiia</taxon>
        <taxon>Chlorobiales</taxon>
        <taxon>Chlorobiaceae</taxon>
        <taxon>Chlorobium/Pelodictyon group</taxon>
        <taxon>Pelodictyon</taxon>
    </lineage>
</organism>
<comment type="catalytic activity">
    <reaction evidence="1">
        <text>(4aS,6R)-4a-hydroxy-L-erythro-5,6,7,8-tetrahydrobiopterin = (6R)-L-erythro-6,7-dihydrobiopterin + H2O</text>
        <dbReference type="Rhea" id="RHEA:11920"/>
        <dbReference type="ChEBI" id="CHEBI:15377"/>
        <dbReference type="ChEBI" id="CHEBI:15642"/>
        <dbReference type="ChEBI" id="CHEBI:43120"/>
        <dbReference type="EC" id="4.2.1.96"/>
    </reaction>
</comment>
<comment type="similarity">
    <text evidence="1">Belongs to the pterin-4-alpha-carbinolamine dehydratase family.</text>
</comment>
<comment type="sequence caution" evidence="2">
    <conflict type="erroneous initiation">
        <sequence resource="EMBL-CDS" id="ABB22996"/>
    </conflict>
</comment>
<sequence length="114" mass="13043">MGELNKTKCVSCSEGLPPLAERESEELLKEIPEWVIVSEDGVSRLVRTFTFENFREAMAFAGSVGELAESEQHHPKLVTEWGKVRVEWWTHAVHGLHMNDFVMAARTDELFQEL</sequence>
<proteinExistence type="inferred from homology"/>
<gene>
    <name type="ordered locus">Plut_0106</name>
</gene>
<name>PHS_CHLL3</name>
<dbReference type="EC" id="4.2.1.96" evidence="1"/>
<dbReference type="EMBL" id="CP000096">
    <property type="protein sequence ID" value="ABB22996.1"/>
    <property type="status" value="ALT_INIT"/>
    <property type="molecule type" value="Genomic_DNA"/>
</dbReference>
<dbReference type="RefSeq" id="WP_041463965.1">
    <property type="nucleotide sequence ID" value="NC_007512.1"/>
</dbReference>
<dbReference type="SMR" id="Q3B6N5"/>
<dbReference type="STRING" id="319225.Plut_0106"/>
<dbReference type="KEGG" id="plt:Plut_0106"/>
<dbReference type="eggNOG" id="COG2154">
    <property type="taxonomic scope" value="Bacteria"/>
</dbReference>
<dbReference type="HOGENOM" id="CLU_081974_2_2_10"/>
<dbReference type="OrthoDB" id="9800108at2"/>
<dbReference type="Proteomes" id="UP000002709">
    <property type="component" value="Chromosome"/>
</dbReference>
<dbReference type="GO" id="GO:0008124">
    <property type="term" value="F:4-alpha-hydroxytetrahydrobiopterin dehydratase activity"/>
    <property type="evidence" value="ECO:0007669"/>
    <property type="project" value="UniProtKB-UniRule"/>
</dbReference>
<dbReference type="GO" id="GO:0006729">
    <property type="term" value="P:tetrahydrobiopterin biosynthetic process"/>
    <property type="evidence" value="ECO:0007669"/>
    <property type="project" value="InterPro"/>
</dbReference>
<dbReference type="CDD" id="cd00913">
    <property type="entry name" value="PCD_DCoH_subfamily_a"/>
    <property type="match status" value="1"/>
</dbReference>
<dbReference type="Gene3D" id="3.30.1360.20">
    <property type="entry name" value="Transcriptional coactivator/pterin dehydratase"/>
    <property type="match status" value="1"/>
</dbReference>
<dbReference type="HAMAP" id="MF_00434">
    <property type="entry name" value="Pterin_4_alpha"/>
    <property type="match status" value="1"/>
</dbReference>
<dbReference type="InterPro" id="IPR036428">
    <property type="entry name" value="PCD_sf"/>
</dbReference>
<dbReference type="InterPro" id="IPR050376">
    <property type="entry name" value="Pterin-4-alpha-carb_dehyd"/>
</dbReference>
<dbReference type="InterPro" id="IPR001533">
    <property type="entry name" value="Pterin_deHydtase"/>
</dbReference>
<dbReference type="NCBIfam" id="NF002016">
    <property type="entry name" value="PRK00823.1-1"/>
    <property type="match status" value="1"/>
</dbReference>
<dbReference type="PANTHER" id="PTHR42805">
    <property type="entry name" value="PTERIN-4-ALPHA-CARBINOLAMINE DEHYDRATASE-RELATED"/>
    <property type="match status" value="1"/>
</dbReference>
<dbReference type="PANTHER" id="PTHR42805:SF1">
    <property type="entry name" value="PTERIN-4-ALPHA-CARBINOLAMINE DEHYDRATASE-RELATED"/>
    <property type="match status" value="1"/>
</dbReference>
<dbReference type="Pfam" id="PF01329">
    <property type="entry name" value="Pterin_4a"/>
    <property type="match status" value="1"/>
</dbReference>
<dbReference type="SUPFAM" id="SSF55248">
    <property type="entry name" value="PCD-like"/>
    <property type="match status" value="1"/>
</dbReference>
<protein>
    <recommendedName>
        <fullName evidence="1">Putative pterin-4-alpha-carbinolamine dehydratase</fullName>
        <shortName evidence="1">PHS</shortName>
        <ecNumber evidence="1">4.2.1.96</ecNumber>
    </recommendedName>
    <alternativeName>
        <fullName evidence="1">4-alpha-hydroxy-tetrahydropterin dehydratase</fullName>
    </alternativeName>
    <alternativeName>
        <fullName evidence="1">Pterin carbinolamine dehydratase</fullName>
        <shortName evidence="1">PCD</shortName>
    </alternativeName>
</protein>
<reference key="1">
    <citation type="submission" date="2005-08" db="EMBL/GenBank/DDBJ databases">
        <title>Complete sequence of Pelodictyon luteolum DSM 273.</title>
        <authorList>
            <consortium name="US DOE Joint Genome Institute"/>
            <person name="Copeland A."/>
            <person name="Lucas S."/>
            <person name="Lapidus A."/>
            <person name="Barry K."/>
            <person name="Detter J.C."/>
            <person name="Glavina T."/>
            <person name="Hammon N."/>
            <person name="Israni S."/>
            <person name="Pitluck S."/>
            <person name="Bryant D."/>
            <person name="Schmutz J."/>
            <person name="Larimer F."/>
            <person name="Land M."/>
            <person name="Kyrpides N."/>
            <person name="Ivanova N."/>
            <person name="Richardson P."/>
        </authorList>
    </citation>
    <scope>NUCLEOTIDE SEQUENCE [LARGE SCALE GENOMIC DNA]</scope>
    <source>
        <strain>DSM 273 / BCRC 81028 / 2530</strain>
    </source>
</reference>
<keyword id="KW-0456">Lyase</keyword>
<keyword id="KW-1185">Reference proteome</keyword>
<feature type="chain" id="PRO_0000231459" description="Putative pterin-4-alpha-carbinolamine dehydratase">
    <location>
        <begin position="1"/>
        <end position="114"/>
    </location>
</feature>